<accession>P0AEI5</accession>
<accession>P75802</accession>
<evidence type="ECO:0000255" key="1">
    <source>
        <dbReference type="HAMAP-Rule" id="MF_01865"/>
    </source>
</evidence>
<evidence type="ECO:0000255" key="2">
    <source>
        <dbReference type="PROSITE-ProRule" id="PRU01266"/>
    </source>
</evidence>
<gene>
    <name evidence="1" type="primary">rimO</name>
    <name type="ordered locus">Z1061</name>
    <name type="ordered locus">ECs0915</name>
</gene>
<name>RIMO_ECO57</name>
<dbReference type="EC" id="2.8.4.4" evidence="1"/>
<dbReference type="EMBL" id="AE005174">
    <property type="protein sequence ID" value="AAG55211.1"/>
    <property type="molecule type" value="Genomic_DNA"/>
</dbReference>
<dbReference type="EMBL" id="BA000007">
    <property type="protein sequence ID" value="BAB34338.1"/>
    <property type="molecule type" value="Genomic_DNA"/>
</dbReference>
<dbReference type="PIR" id="C90743">
    <property type="entry name" value="C90743"/>
</dbReference>
<dbReference type="PIR" id="G85593">
    <property type="entry name" value="G85593"/>
</dbReference>
<dbReference type="RefSeq" id="NP_308942.1">
    <property type="nucleotide sequence ID" value="NC_002695.1"/>
</dbReference>
<dbReference type="RefSeq" id="WP_000049367.1">
    <property type="nucleotide sequence ID" value="NZ_VOAI01000006.1"/>
</dbReference>
<dbReference type="SMR" id="P0AEI5"/>
<dbReference type="STRING" id="155864.Z1061"/>
<dbReference type="GeneID" id="75204700"/>
<dbReference type="GeneID" id="917659"/>
<dbReference type="KEGG" id="ece:Z1061"/>
<dbReference type="KEGG" id="ecs:ECs_0915"/>
<dbReference type="PATRIC" id="fig|386585.9.peg.1031"/>
<dbReference type="eggNOG" id="COG0621">
    <property type="taxonomic scope" value="Bacteria"/>
</dbReference>
<dbReference type="HOGENOM" id="CLU_018697_0_0_6"/>
<dbReference type="OMA" id="HYAYPTG"/>
<dbReference type="Proteomes" id="UP000000558">
    <property type="component" value="Chromosome"/>
</dbReference>
<dbReference type="Proteomes" id="UP000002519">
    <property type="component" value="Chromosome"/>
</dbReference>
<dbReference type="GO" id="GO:0005829">
    <property type="term" value="C:cytosol"/>
    <property type="evidence" value="ECO:0007669"/>
    <property type="project" value="TreeGrafter"/>
</dbReference>
<dbReference type="GO" id="GO:0051539">
    <property type="term" value="F:4 iron, 4 sulfur cluster binding"/>
    <property type="evidence" value="ECO:0007669"/>
    <property type="project" value="UniProtKB-UniRule"/>
</dbReference>
<dbReference type="GO" id="GO:0035599">
    <property type="term" value="F:aspartic acid methylthiotransferase activity"/>
    <property type="evidence" value="ECO:0007669"/>
    <property type="project" value="TreeGrafter"/>
</dbReference>
<dbReference type="GO" id="GO:0046872">
    <property type="term" value="F:metal ion binding"/>
    <property type="evidence" value="ECO:0007669"/>
    <property type="project" value="UniProtKB-KW"/>
</dbReference>
<dbReference type="GO" id="GO:0103039">
    <property type="term" value="F:protein methylthiotransferase activity"/>
    <property type="evidence" value="ECO:0007669"/>
    <property type="project" value="UniProtKB-EC"/>
</dbReference>
<dbReference type="GO" id="GO:0006400">
    <property type="term" value="P:tRNA modification"/>
    <property type="evidence" value="ECO:0007669"/>
    <property type="project" value="InterPro"/>
</dbReference>
<dbReference type="CDD" id="cd01335">
    <property type="entry name" value="Radical_SAM"/>
    <property type="match status" value="1"/>
</dbReference>
<dbReference type="FunFam" id="2.40.50.140:FF:000060">
    <property type="entry name" value="Ribosomal protein S12 methylthiotransferase RimO"/>
    <property type="match status" value="1"/>
</dbReference>
<dbReference type="FunFam" id="3.40.50.12160:FF:000002">
    <property type="entry name" value="Ribosomal protein S12 methylthiotransferase RimO"/>
    <property type="match status" value="1"/>
</dbReference>
<dbReference type="FunFam" id="3.80.30.20:FF:000001">
    <property type="entry name" value="tRNA-2-methylthio-N(6)-dimethylallyladenosine synthase 2"/>
    <property type="match status" value="1"/>
</dbReference>
<dbReference type="Gene3D" id="3.40.50.12160">
    <property type="entry name" value="Methylthiotransferase, N-terminal domain"/>
    <property type="match status" value="1"/>
</dbReference>
<dbReference type="Gene3D" id="2.40.50.140">
    <property type="entry name" value="Nucleic acid-binding proteins"/>
    <property type="match status" value="1"/>
</dbReference>
<dbReference type="Gene3D" id="3.80.30.20">
    <property type="entry name" value="tm_1862 like domain"/>
    <property type="match status" value="1"/>
</dbReference>
<dbReference type="HAMAP" id="MF_01865">
    <property type="entry name" value="MTTase_RimO"/>
    <property type="match status" value="1"/>
</dbReference>
<dbReference type="InterPro" id="IPR006638">
    <property type="entry name" value="Elp3/MiaA/NifB-like_rSAM"/>
</dbReference>
<dbReference type="InterPro" id="IPR005839">
    <property type="entry name" value="Methylthiotransferase"/>
</dbReference>
<dbReference type="InterPro" id="IPR020612">
    <property type="entry name" value="Methylthiotransferase_CS"/>
</dbReference>
<dbReference type="InterPro" id="IPR013848">
    <property type="entry name" value="Methylthiotransferase_N"/>
</dbReference>
<dbReference type="InterPro" id="IPR038135">
    <property type="entry name" value="Methylthiotransferase_N_sf"/>
</dbReference>
<dbReference type="InterPro" id="IPR012340">
    <property type="entry name" value="NA-bd_OB-fold"/>
</dbReference>
<dbReference type="InterPro" id="IPR005840">
    <property type="entry name" value="Ribosomal_uS12_MeSTrfase_RimO"/>
</dbReference>
<dbReference type="InterPro" id="IPR007197">
    <property type="entry name" value="rSAM"/>
</dbReference>
<dbReference type="InterPro" id="IPR023404">
    <property type="entry name" value="rSAM_horseshoe"/>
</dbReference>
<dbReference type="InterPro" id="IPR002792">
    <property type="entry name" value="TRAM_dom"/>
</dbReference>
<dbReference type="NCBIfam" id="TIGR01125">
    <property type="entry name" value="30S ribosomal protein S12 methylthiotransferase RimO"/>
    <property type="match status" value="1"/>
</dbReference>
<dbReference type="NCBIfam" id="TIGR00089">
    <property type="entry name" value="MiaB/RimO family radical SAM methylthiotransferase"/>
    <property type="match status" value="1"/>
</dbReference>
<dbReference type="PANTHER" id="PTHR43837">
    <property type="entry name" value="RIBOSOMAL PROTEIN S12 METHYLTHIOTRANSFERASE RIMO"/>
    <property type="match status" value="1"/>
</dbReference>
<dbReference type="PANTHER" id="PTHR43837:SF1">
    <property type="entry name" value="RIBOSOMAL PROTEIN US12 METHYLTHIOTRANSFERASE RIMO"/>
    <property type="match status" value="1"/>
</dbReference>
<dbReference type="Pfam" id="PF04055">
    <property type="entry name" value="Radical_SAM"/>
    <property type="match status" value="1"/>
</dbReference>
<dbReference type="Pfam" id="PF18693">
    <property type="entry name" value="TRAM_2"/>
    <property type="match status" value="1"/>
</dbReference>
<dbReference type="Pfam" id="PF00919">
    <property type="entry name" value="UPF0004"/>
    <property type="match status" value="1"/>
</dbReference>
<dbReference type="SFLD" id="SFLDG01082">
    <property type="entry name" value="B12-binding_domain_containing"/>
    <property type="match status" value="1"/>
</dbReference>
<dbReference type="SFLD" id="SFLDS00029">
    <property type="entry name" value="Radical_SAM"/>
    <property type="match status" value="1"/>
</dbReference>
<dbReference type="SFLD" id="SFLDF00274">
    <property type="entry name" value="ribosomal_protein_S12_methylth"/>
    <property type="match status" value="1"/>
</dbReference>
<dbReference type="SMART" id="SM00729">
    <property type="entry name" value="Elp3"/>
    <property type="match status" value="1"/>
</dbReference>
<dbReference type="SUPFAM" id="SSF102114">
    <property type="entry name" value="Radical SAM enzymes"/>
    <property type="match status" value="1"/>
</dbReference>
<dbReference type="PROSITE" id="PS51449">
    <property type="entry name" value="MTTASE_N"/>
    <property type="match status" value="1"/>
</dbReference>
<dbReference type="PROSITE" id="PS01278">
    <property type="entry name" value="MTTASE_RADICAL"/>
    <property type="match status" value="1"/>
</dbReference>
<dbReference type="PROSITE" id="PS51918">
    <property type="entry name" value="RADICAL_SAM"/>
    <property type="match status" value="1"/>
</dbReference>
<dbReference type="PROSITE" id="PS50926">
    <property type="entry name" value="TRAM"/>
    <property type="match status" value="1"/>
</dbReference>
<feature type="chain" id="PRO_0000141739" description="Ribosomal protein uS12 methylthiotransferase RimO">
    <location>
        <begin position="1"/>
        <end position="441"/>
    </location>
</feature>
<feature type="domain" description="MTTase N-terminal" evidence="1">
    <location>
        <begin position="8"/>
        <end position="118"/>
    </location>
</feature>
<feature type="domain" description="Radical SAM core" evidence="2">
    <location>
        <begin position="136"/>
        <end position="373"/>
    </location>
</feature>
<feature type="domain" description="TRAM" evidence="1">
    <location>
        <begin position="376"/>
        <end position="441"/>
    </location>
</feature>
<feature type="binding site" evidence="1">
    <location>
        <position position="17"/>
    </location>
    <ligand>
        <name>[4Fe-4S] cluster</name>
        <dbReference type="ChEBI" id="CHEBI:49883"/>
        <label>1</label>
    </ligand>
</feature>
<feature type="binding site" evidence="1">
    <location>
        <position position="53"/>
    </location>
    <ligand>
        <name>[4Fe-4S] cluster</name>
        <dbReference type="ChEBI" id="CHEBI:49883"/>
        <label>1</label>
    </ligand>
</feature>
<feature type="binding site" evidence="1">
    <location>
        <position position="82"/>
    </location>
    <ligand>
        <name>[4Fe-4S] cluster</name>
        <dbReference type="ChEBI" id="CHEBI:49883"/>
        <label>1</label>
    </ligand>
</feature>
<feature type="binding site" evidence="1">
    <location>
        <position position="150"/>
    </location>
    <ligand>
        <name>[4Fe-4S] cluster</name>
        <dbReference type="ChEBI" id="CHEBI:49883"/>
        <label>2</label>
        <note>4Fe-4S-S-AdoMet</note>
    </ligand>
</feature>
<feature type="binding site" evidence="1">
    <location>
        <position position="154"/>
    </location>
    <ligand>
        <name>[4Fe-4S] cluster</name>
        <dbReference type="ChEBI" id="CHEBI:49883"/>
        <label>2</label>
        <note>4Fe-4S-S-AdoMet</note>
    </ligand>
</feature>
<feature type="binding site" evidence="1">
    <location>
        <position position="157"/>
    </location>
    <ligand>
        <name>[4Fe-4S] cluster</name>
        <dbReference type="ChEBI" id="CHEBI:49883"/>
        <label>2</label>
        <note>4Fe-4S-S-AdoMet</note>
    </ligand>
</feature>
<proteinExistence type="inferred from homology"/>
<sequence>MSKVTPQPKIGFVSLGCPKNLVDSERILTELRTEGYDVVPSYDDADMVIVNTCGFIDSAVQESLEAIGEALNENGKVIVTGCLGAKEDQIREVHPKVLEITGPHSYEQVLEHVHHYVPKPKHNPFLSLVPEQGVKLTPRHYAYLKISEGCNHRCTFCIIPSMRGDLVSRPIGEVLSEAKRLVDAGVKEILVISQDTSAYGVDVKHRTGFHNGEPVKTSMVSLCEQLSKLGIWTRLHYVYPYPHVDDVIPLMAEGKILPYLDIPLQHASPRILKLMKRPGSVDRQLARIKQWREICPELTLRSTFIVGFPGETEEDFQMLLDFLKEARLDRVGCFKYSPVEGADANALPDQVPEEVKEERWNRFMQLQQQISAERLQEKVGREILVIIDEVDEEGAIGRSMADAPEIDGAVYLNGETNVKPGDILRVKVEHADEYDLWGSRV</sequence>
<keyword id="KW-0004">4Fe-4S</keyword>
<keyword id="KW-0963">Cytoplasm</keyword>
<keyword id="KW-0408">Iron</keyword>
<keyword id="KW-0411">Iron-sulfur</keyword>
<keyword id="KW-0479">Metal-binding</keyword>
<keyword id="KW-1185">Reference proteome</keyword>
<keyword id="KW-0949">S-adenosyl-L-methionine</keyword>
<keyword id="KW-0808">Transferase</keyword>
<protein>
    <recommendedName>
        <fullName evidence="1">Ribosomal protein uS12 methylthiotransferase RimO</fullName>
        <shortName evidence="1">uS12 MTTase</shortName>
        <shortName evidence="1">uS12 methylthiotransferase</shortName>
        <ecNumber evidence="1">2.8.4.4</ecNumber>
    </recommendedName>
    <alternativeName>
        <fullName evidence="1">Ribosomal protein uS12 (aspartate-C(3))-methylthiotransferase</fullName>
    </alternativeName>
    <alternativeName>
        <fullName evidence="1">Ribosome maturation factor RimO</fullName>
    </alternativeName>
</protein>
<comment type="function">
    <text evidence="1">Catalyzes the methylthiolation of an aspartic acid residue of ribosomal protein uS12.</text>
</comment>
<comment type="catalytic activity">
    <reaction evidence="1">
        <text>L-aspartate(89)-[ribosomal protein uS12]-hydrogen + (sulfur carrier)-SH + AH2 + 2 S-adenosyl-L-methionine = 3-methylsulfanyl-L-aspartate(89)-[ribosomal protein uS12]-hydrogen + (sulfur carrier)-H + 5'-deoxyadenosine + L-methionine + A + S-adenosyl-L-homocysteine + 2 H(+)</text>
        <dbReference type="Rhea" id="RHEA:37087"/>
        <dbReference type="Rhea" id="RHEA-COMP:10460"/>
        <dbReference type="Rhea" id="RHEA-COMP:10461"/>
        <dbReference type="Rhea" id="RHEA-COMP:14737"/>
        <dbReference type="Rhea" id="RHEA-COMP:14739"/>
        <dbReference type="ChEBI" id="CHEBI:13193"/>
        <dbReference type="ChEBI" id="CHEBI:15378"/>
        <dbReference type="ChEBI" id="CHEBI:17319"/>
        <dbReference type="ChEBI" id="CHEBI:17499"/>
        <dbReference type="ChEBI" id="CHEBI:29917"/>
        <dbReference type="ChEBI" id="CHEBI:29961"/>
        <dbReference type="ChEBI" id="CHEBI:57844"/>
        <dbReference type="ChEBI" id="CHEBI:57856"/>
        <dbReference type="ChEBI" id="CHEBI:59789"/>
        <dbReference type="ChEBI" id="CHEBI:64428"/>
        <dbReference type="ChEBI" id="CHEBI:73599"/>
        <dbReference type="EC" id="2.8.4.4"/>
    </reaction>
</comment>
<comment type="cofactor">
    <cofactor evidence="1">
        <name>[4Fe-4S] cluster</name>
        <dbReference type="ChEBI" id="CHEBI:49883"/>
    </cofactor>
    <text evidence="1">Binds 2 [4Fe-4S] clusters. One cluster is coordinated with 3 cysteines and an exchangeable S-adenosyl-L-methionine.</text>
</comment>
<comment type="subcellular location">
    <subcellularLocation>
        <location evidence="1">Cytoplasm</location>
    </subcellularLocation>
</comment>
<comment type="similarity">
    <text evidence="1">Belongs to the methylthiotransferase family. RimO subfamily.</text>
</comment>
<organism>
    <name type="scientific">Escherichia coli O157:H7</name>
    <dbReference type="NCBI Taxonomy" id="83334"/>
    <lineage>
        <taxon>Bacteria</taxon>
        <taxon>Pseudomonadati</taxon>
        <taxon>Pseudomonadota</taxon>
        <taxon>Gammaproteobacteria</taxon>
        <taxon>Enterobacterales</taxon>
        <taxon>Enterobacteriaceae</taxon>
        <taxon>Escherichia</taxon>
    </lineage>
</organism>
<reference key="1">
    <citation type="journal article" date="2001" name="Nature">
        <title>Genome sequence of enterohaemorrhagic Escherichia coli O157:H7.</title>
        <authorList>
            <person name="Perna N.T."/>
            <person name="Plunkett G. III"/>
            <person name="Burland V."/>
            <person name="Mau B."/>
            <person name="Glasner J.D."/>
            <person name="Rose D.J."/>
            <person name="Mayhew G.F."/>
            <person name="Evans P.S."/>
            <person name="Gregor J."/>
            <person name="Kirkpatrick H.A."/>
            <person name="Posfai G."/>
            <person name="Hackett J."/>
            <person name="Klink S."/>
            <person name="Boutin A."/>
            <person name="Shao Y."/>
            <person name="Miller L."/>
            <person name="Grotbeck E.J."/>
            <person name="Davis N.W."/>
            <person name="Lim A."/>
            <person name="Dimalanta E.T."/>
            <person name="Potamousis K."/>
            <person name="Apodaca J."/>
            <person name="Anantharaman T.S."/>
            <person name="Lin J."/>
            <person name="Yen G."/>
            <person name="Schwartz D.C."/>
            <person name="Welch R.A."/>
            <person name="Blattner F.R."/>
        </authorList>
    </citation>
    <scope>NUCLEOTIDE SEQUENCE [LARGE SCALE GENOMIC DNA]</scope>
    <source>
        <strain>O157:H7 / EDL933 / ATCC 700927 / EHEC</strain>
    </source>
</reference>
<reference key="2">
    <citation type="journal article" date="2001" name="DNA Res.">
        <title>Complete genome sequence of enterohemorrhagic Escherichia coli O157:H7 and genomic comparison with a laboratory strain K-12.</title>
        <authorList>
            <person name="Hayashi T."/>
            <person name="Makino K."/>
            <person name="Ohnishi M."/>
            <person name="Kurokawa K."/>
            <person name="Ishii K."/>
            <person name="Yokoyama K."/>
            <person name="Han C.-G."/>
            <person name="Ohtsubo E."/>
            <person name="Nakayama K."/>
            <person name="Murata T."/>
            <person name="Tanaka M."/>
            <person name="Tobe T."/>
            <person name="Iida T."/>
            <person name="Takami H."/>
            <person name="Honda T."/>
            <person name="Sasakawa C."/>
            <person name="Ogasawara N."/>
            <person name="Yasunaga T."/>
            <person name="Kuhara S."/>
            <person name="Shiba T."/>
            <person name="Hattori M."/>
            <person name="Shinagawa H."/>
        </authorList>
    </citation>
    <scope>NUCLEOTIDE SEQUENCE [LARGE SCALE GENOMIC DNA]</scope>
    <source>
        <strain>O157:H7 / Sakai / RIMD 0509952 / EHEC</strain>
    </source>
</reference>